<proteinExistence type="evidence at protein level"/>
<protein>
    <recommendedName>
        <fullName evidence="9">CMP-sialic acid transporter</fullName>
        <shortName>CMP-SA-Tr</shortName>
        <shortName>CMP-Sia-Tr</shortName>
        <shortName evidence="9">CST</shortName>
    </recommendedName>
    <alternativeName>
        <fullName>Solute carrier family 35 member A1</fullName>
    </alternativeName>
</protein>
<comment type="function">
    <text evidence="1 2 3 4">Transports CMP-sialic acid from the cytosol into the Golgi apparatus, functioning as an antiporter that exchanges CMP-sialic acid for CMP (PubMed:12682060, PubMed:15576474, PubMed:23873973). Binds both CMP-sialic acid and free CMP, but has higher affinity for free CMP (By similarity). Also able to exchange CMP-sialic acid for AMP and UMP (PubMed:12682060). Also mediates the transport of CDP-ribitol (By similarity).</text>
</comment>
<comment type="catalytic activity">
    <reaction evidence="2 3">
        <text>CMP-N-acetyl-beta-neuraminate(in) + CMP(out) = CMP-N-acetyl-beta-neuraminate(out) + CMP(in)</text>
        <dbReference type="Rhea" id="RHEA:67724"/>
        <dbReference type="ChEBI" id="CHEBI:57812"/>
        <dbReference type="ChEBI" id="CHEBI:60377"/>
    </reaction>
</comment>
<comment type="catalytic activity">
    <reaction evidence="2">
        <text>CMP-N-acetyl-beta-neuraminate(in) + AMP(out) = CMP-N-acetyl-beta-neuraminate(out) + AMP(in)</text>
        <dbReference type="Rhea" id="RHEA:74639"/>
        <dbReference type="ChEBI" id="CHEBI:57812"/>
        <dbReference type="ChEBI" id="CHEBI:456215"/>
    </reaction>
</comment>
<comment type="catalytic activity">
    <reaction evidence="1">
        <text>CDP-L-ribitol(in) + CDP(out) = CDP-L-ribitol(out) + CDP(in)</text>
        <dbReference type="Rhea" id="RHEA:71579"/>
        <dbReference type="ChEBI" id="CHEBI:57608"/>
        <dbReference type="ChEBI" id="CHEBI:58069"/>
    </reaction>
</comment>
<comment type="catalytic activity">
    <reaction evidence="2">
        <text>UMP(out) + CMP-N-acetyl-beta-neuraminate(in) = UMP(in) + CMP-N-acetyl-beta-neuraminate(out)</text>
        <dbReference type="Rhea" id="RHEA:74643"/>
        <dbReference type="ChEBI" id="CHEBI:57812"/>
        <dbReference type="ChEBI" id="CHEBI:57865"/>
    </reaction>
</comment>
<comment type="biophysicochemical properties">
    <kinetics>
        <KM evidence="2">60 uM for CMP-N-acetyl-beta-neuraminate</KM>
    </kinetics>
</comment>
<comment type="subunit">
    <text evidence="6">Monomer.</text>
</comment>
<comment type="interaction">
    <interactant intactId="EBI-12870360">
        <id>P78382</id>
    </interactant>
    <interactant intactId="EBI-13059134">
        <id>Q13520</id>
        <label>AQP6</label>
    </interactant>
    <organismsDiffer>false</organismsDiffer>
    <experiments>3</experiments>
</comment>
<comment type="interaction">
    <interactant intactId="EBI-12870360">
        <id>P78382</id>
    </interactant>
    <interactant intactId="EBI-11343438">
        <id>Q3SXY8</id>
        <label>ARL13B</label>
    </interactant>
    <organismsDiffer>false</organismsDiffer>
    <experiments>3</experiments>
</comment>
<comment type="interaction">
    <interactant intactId="EBI-12870360">
        <id>P78382</id>
    </interactant>
    <interactant intactId="EBI-12808270">
        <id>P07307-3</id>
        <label>ASGR2</label>
    </interactant>
    <organismsDiffer>false</organismsDiffer>
    <experiments>3</experiments>
</comment>
<comment type="interaction">
    <interactant intactId="EBI-12870360">
        <id>P78382</id>
    </interactant>
    <interactant intactId="EBI-12239061">
        <id>Q8WWH4</id>
        <label>ASZ1</label>
    </interactant>
    <organismsDiffer>false</organismsDiffer>
    <experiments>3</experiments>
</comment>
<comment type="interaction">
    <interactant intactId="EBI-12870360">
        <id>P78382</id>
    </interactant>
    <interactant intactId="EBI-747430">
        <id>Q9BXK5</id>
        <label>BCL2L13</label>
    </interactant>
    <organismsDiffer>false</organismsDiffer>
    <experiments>3</experiments>
</comment>
<comment type="interaction">
    <interactant intactId="EBI-12870360">
        <id>P78382</id>
    </interactant>
    <interactant intactId="EBI-6657396">
        <id>P19397</id>
        <label>CD53</label>
    </interactant>
    <organismsDiffer>false</organismsDiffer>
    <experiments>3</experiments>
</comment>
<comment type="interaction">
    <interactant intactId="EBI-12870360">
        <id>P78382</id>
    </interactant>
    <interactant intactId="EBI-2622997">
        <id>Q9HA82</id>
        <label>CERS4</label>
    </interactant>
    <organismsDiffer>false</organismsDiffer>
    <experiments>3</experiments>
</comment>
<comment type="interaction">
    <interactant intactId="EBI-12870360">
        <id>P78382</id>
    </interactant>
    <interactant intactId="EBI-18013275">
        <id>Q7Z7G2</id>
        <label>CPLX4</label>
    </interactant>
    <organismsDiffer>false</organismsDiffer>
    <experiments>3</experiments>
</comment>
<comment type="interaction">
    <interactant intactId="EBI-12870360">
        <id>P78382</id>
    </interactant>
    <interactant intactId="EBI-8787095">
        <id>O00559</id>
        <label>EBAG9</label>
    </interactant>
    <organismsDiffer>false</organismsDiffer>
    <experiments>3</experiments>
</comment>
<comment type="interaction">
    <interactant intactId="EBI-12870360">
        <id>P78382</id>
    </interactant>
    <interactant intactId="EBI-781551">
        <id>Q9Y282</id>
        <label>ERGIC3</label>
    </interactant>
    <organismsDiffer>false</organismsDiffer>
    <experiments>3</experiments>
</comment>
<comment type="interaction">
    <interactant intactId="EBI-12870360">
        <id>P78382</id>
    </interactant>
    <interactant intactId="EBI-742600">
        <id>Q9Y624</id>
        <label>F11R</label>
    </interactant>
    <organismsDiffer>false</organismsDiffer>
    <experiments>3</experiments>
</comment>
<comment type="interaction">
    <interactant intactId="EBI-12870360">
        <id>P78382</id>
    </interactant>
    <interactant intactId="EBI-18304435">
        <id>Q5JX71</id>
        <label>FAM209A</label>
    </interactant>
    <organismsDiffer>false</organismsDiffer>
    <experiments>3</experiments>
</comment>
<comment type="interaction">
    <interactant intactId="EBI-12870360">
        <id>P78382</id>
    </interactant>
    <interactant intactId="EBI-12142257">
        <id>Q8TBE3</id>
        <label>FNDC9</label>
    </interactant>
    <organismsDiffer>false</organismsDiffer>
    <experiments>3</experiments>
</comment>
<comment type="interaction">
    <interactant intactId="EBI-12870360">
        <id>P78382</id>
    </interactant>
    <interactant intactId="EBI-12175685">
        <id>Q14802-3</id>
        <label>FXYD3</label>
    </interactant>
    <organismsDiffer>false</organismsDiffer>
    <experiments>3</experiments>
</comment>
<comment type="interaction">
    <interactant intactId="EBI-12870360">
        <id>P78382</id>
    </interactant>
    <interactant intactId="EBI-11721746">
        <id>Q8TED1</id>
        <label>GPX8</label>
    </interactant>
    <organismsDiffer>false</organismsDiffer>
    <experiments>3</experiments>
</comment>
<comment type="interaction">
    <interactant intactId="EBI-12870360">
        <id>P78382</id>
    </interactant>
    <interactant intactId="EBI-17272405">
        <id>Q8N743</id>
        <label>KIR3DL3</label>
    </interactant>
    <organismsDiffer>false</organismsDiffer>
    <experiments>3</experiments>
</comment>
<comment type="interaction">
    <interactant intactId="EBI-12870360">
        <id>P78382</id>
    </interactant>
    <interactant intactId="EBI-2820517">
        <id>Q8TAF8</id>
        <label>LHFPL5</label>
    </interactant>
    <organismsDiffer>false</organismsDiffer>
    <experiments>3</experiments>
</comment>
<comment type="interaction">
    <interactant intactId="EBI-12870360">
        <id>P78382</id>
    </interactant>
    <interactant intactId="EBI-2689785">
        <id>Q8NI22</id>
        <label>MCFD2</label>
    </interactant>
    <organismsDiffer>false</organismsDiffer>
    <experiments>3</experiments>
</comment>
<comment type="interaction">
    <interactant intactId="EBI-12870360">
        <id>P78382</id>
    </interactant>
    <interactant intactId="EBI-724754">
        <id>O14880</id>
        <label>MGST3</label>
    </interactant>
    <organismsDiffer>false</organismsDiffer>
    <experiments>3</experiments>
</comment>
<comment type="interaction">
    <interactant intactId="EBI-12870360">
        <id>P78382</id>
    </interactant>
    <interactant intactId="EBI-750085">
        <id>Q9Y676</id>
        <label>MRPS18B</label>
    </interactant>
    <organismsDiffer>false</organismsDiffer>
    <experiments>3</experiments>
</comment>
<comment type="interaction">
    <interactant intactId="EBI-12870360">
        <id>P78382</id>
    </interactant>
    <interactant intactId="EBI-10285708">
        <id>Q96FE7</id>
        <label>PIK3IP1</label>
    </interactant>
    <organismsDiffer>false</organismsDiffer>
    <experiments>3</experiments>
</comment>
<comment type="interaction">
    <interactant intactId="EBI-12870360">
        <id>P78382</id>
    </interactant>
    <interactant intactId="EBI-10485931">
        <id>Q5VZY2</id>
        <label>PLPP4</label>
    </interactant>
    <organismsDiffer>false</organismsDiffer>
    <experiments>3</experiments>
</comment>
<comment type="interaction">
    <interactant intactId="EBI-12870360">
        <id>P78382</id>
    </interactant>
    <interactant intactId="EBI-10269209">
        <id>Q8NC24</id>
        <label>RELL2</label>
    </interactant>
    <organismsDiffer>false</organismsDiffer>
    <experiments>3</experiments>
</comment>
<comment type="interaction">
    <interactant intactId="EBI-12870360">
        <id>P78382</id>
    </interactant>
    <interactant intactId="EBI-3920694">
        <id>Q9NR31</id>
        <label>SAR1A</label>
    </interactant>
    <organismsDiffer>false</organismsDiffer>
    <experiments>3</experiments>
</comment>
<comment type="interaction">
    <interactant intactId="EBI-12870360">
        <id>P78382</id>
    </interactant>
    <interactant intactId="EBI-10204280">
        <id>A0A0S2Z4U3</id>
        <label>SDC3</label>
    </interactant>
    <organismsDiffer>false</organismsDiffer>
    <experiments>3</experiments>
</comment>
<comment type="interaction">
    <interactant intactId="EBI-12870360">
        <id>P78382</id>
    </interactant>
    <interactant intactId="EBI-745376">
        <id>P43005</id>
        <label>SLC1A1</label>
    </interactant>
    <organismsDiffer>false</organismsDiffer>
    <experiments>3</experiments>
</comment>
<comment type="interaction">
    <interactant intactId="EBI-12870360">
        <id>P78382</id>
    </interactant>
    <interactant intactId="EBI-12811757">
        <id>O95436-2</id>
        <label>SLC34A2</label>
    </interactant>
    <organismsDiffer>false</organismsDiffer>
    <experiments>3</experiments>
</comment>
<comment type="interaction">
    <interactant intactId="EBI-12870360">
        <id>P78382</id>
    </interactant>
    <interactant intactId="EBI-17280858">
        <id>Q8WWF3</id>
        <label>SSMEM1</label>
    </interactant>
    <organismsDiffer>false</organismsDiffer>
    <experiments>3</experiments>
</comment>
<comment type="interaction">
    <interactant intactId="EBI-12870360">
        <id>P78382</id>
    </interactant>
    <interactant intactId="EBI-8032987">
        <id>Q8N9I0</id>
        <label>SYT2</label>
    </interactant>
    <organismsDiffer>false</organismsDiffer>
    <experiments>3</experiments>
</comment>
<comment type="interaction">
    <interactant intactId="EBI-12870360">
        <id>P78382</id>
    </interactant>
    <interactant intactId="EBI-6447595">
        <id>P57738</id>
        <label>TCTA</label>
    </interactant>
    <organismsDiffer>false</organismsDiffer>
    <experiments>3</experiments>
</comment>
<comment type="interaction">
    <interactant intactId="EBI-12870360">
        <id>P78382</id>
    </interactant>
    <interactant intactId="EBI-7238458">
        <id>Q8IV31</id>
        <label>TMEM139</label>
    </interactant>
    <organismsDiffer>false</organismsDiffer>
    <experiments>3</experiments>
</comment>
<comment type="interaction">
    <interactant intactId="EBI-12870360">
        <id>P78382</id>
    </interactant>
    <interactant intactId="EBI-12345267">
        <id>O15393-2</id>
        <label>TMPRSS2</label>
    </interactant>
    <organismsDiffer>false</organismsDiffer>
    <experiments>3</experiments>
</comment>
<comment type="interaction">
    <interactant intactId="EBI-12870360">
        <id>P78382</id>
    </interactant>
    <interactant intactId="EBI-6447886">
        <id>Q9Y320</id>
        <label>TMX2</label>
    </interactant>
    <organismsDiffer>false</organismsDiffer>
    <experiments>3</experiments>
</comment>
<comment type="subcellular location">
    <subcellularLocation>
        <location evidence="1">Golgi apparatus membrane</location>
        <topology evidence="1">Multi-pass membrane protein</topology>
    </subcellularLocation>
    <subcellularLocation>
        <location evidence="4">Golgi apparatus</location>
    </subcellularLocation>
</comment>
<comment type="alternative products">
    <event type="alternative splicing"/>
    <isoform>
        <id>P78382-1</id>
        <name>1</name>
        <sequence type="displayed"/>
    </isoform>
    <isoform>
        <id>P78382-2</id>
        <name>2</name>
        <sequence type="described" ref="VSP_042916"/>
    </isoform>
</comment>
<comment type="disease" evidence="3 4 5">
    <disease id="DI-01398">
        <name>Congenital disorder of glycosylation 2F</name>
        <acronym>CDG2F</acronym>
        <description>CDGs are a family of severe inherited diseases caused by a defect in protein N-glycosylation. They are characterized by under-glycosylated serum proteins. These multisystem disorders present with a wide variety of clinical features, such as disorders of the nervous system development, psychomotor retardation, dysmorphic features, hypotonia, coagulation disorders, and immunodeficiency. The broad spectrum of features reflects the critical role of N-glycoproteins during embryonic development, differentiation, and maintenance of cell functions.</description>
        <dbReference type="MIM" id="603585"/>
    </disease>
    <text>The disease is caused by variants affecting the gene represented in this entry.</text>
</comment>
<comment type="similarity">
    <text evidence="8">Belongs to the nucleotide-sugar transporter family. SLC35A subfamily.</text>
</comment>
<feature type="chain" id="PRO_0000213351" description="CMP-sialic acid transporter">
    <location>
        <begin position="1"/>
        <end position="337"/>
    </location>
</feature>
<feature type="topological domain" description="Cytoplasmic" evidence="8">
    <location>
        <begin position="1"/>
        <end position="9"/>
    </location>
</feature>
<feature type="transmembrane region" description="Helical" evidence="1">
    <location>
        <begin position="10"/>
        <end position="30"/>
    </location>
</feature>
<feature type="topological domain" description="Lumenal" evidence="8">
    <location>
        <begin position="31"/>
        <end position="45"/>
    </location>
</feature>
<feature type="transmembrane region" description="Helical" evidence="1">
    <location>
        <begin position="46"/>
        <end position="64"/>
    </location>
</feature>
<feature type="topological domain" description="Cytoplasmic" evidence="8">
    <location>
        <begin position="65"/>
        <end position="87"/>
    </location>
</feature>
<feature type="transmembrane region" description="Helical" evidence="1">
    <location>
        <begin position="88"/>
        <end position="108"/>
    </location>
</feature>
<feature type="topological domain" description="Lumenal" evidence="8">
    <location>
        <begin position="109"/>
        <end position="114"/>
    </location>
</feature>
<feature type="transmembrane region" description="Helical" evidence="1">
    <location>
        <begin position="115"/>
        <end position="135"/>
    </location>
</feature>
<feature type="topological domain" description="Cytoplasmic" evidence="8">
    <location>
        <begin position="136"/>
        <end position="141"/>
    </location>
</feature>
<feature type="transmembrane region" description="Helical" evidence="1">
    <location>
        <begin position="142"/>
        <end position="160"/>
    </location>
</feature>
<feature type="topological domain" description="Lumenal" evidence="8">
    <location>
        <begin position="161"/>
        <end position="175"/>
    </location>
</feature>
<feature type="transmembrane region" description="Helical" evidence="1">
    <location>
        <begin position="176"/>
        <end position="196"/>
    </location>
</feature>
<feature type="topological domain" description="Cytoplasmic" evidence="8">
    <location>
        <begin position="197"/>
        <end position="209"/>
    </location>
</feature>
<feature type="transmembrane region" description="Helical" evidence="1">
    <location>
        <begin position="210"/>
        <end position="228"/>
    </location>
</feature>
<feature type="topological domain" description="Lumenal" evidence="8">
    <location>
        <begin position="229"/>
        <end position="243"/>
    </location>
</feature>
<feature type="transmembrane region" description="Helical" evidence="1">
    <location>
        <begin position="244"/>
        <end position="262"/>
    </location>
</feature>
<feature type="topological domain" description="Cytoplasmic" evidence="8">
    <location>
        <begin position="263"/>
        <end position="269"/>
    </location>
</feature>
<feature type="transmembrane region" description="Helical" evidence="1">
    <location>
        <begin position="270"/>
        <end position="288"/>
    </location>
</feature>
<feature type="topological domain" description="Lumenal" evidence="8">
    <location>
        <begin position="289"/>
        <end position="296"/>
    </location>
</feature>
<feature type="transmembrane region" description="Helical" evidence="1">
    <location>
        <begin position="297"/>
        <end position="315"/>
    </location>
</feature>
<feature type="topological domain" description="Cytoplasmic" evidence="8">
    <location>
        <begin position="316"/>
        <end position="337"/>
    </location>
</feature>
<feature type="region of interest" description="Disordered" evidence="1">
    <location>
        <begin position="316"/>
        <end position="337"/>
    </location>
</feature>
<feature type="binding site" evidence="1">
    <location>
        <position position="55"/>
    </location>
    <ligand>
        <name>CMP-N-acetyl-beta-neuraminate</name>
        <dbReference type="ChEBI" id="CHEBI:57812"/>
    </ligand>
</feature>
<feature type="binding site" evidence="1">
    <location>
        <begin position="101"/>
        <end position="102"/>
    </location>
    <ligand>
        <name>CMP-N-acetyl-beta-neuraminate</name>
        <dbReference type="ChEBI" id="CHEBI:57812"/>
    </ligand>
</feature>
<feature type="binding site" evidence="1">
    <location>
        <begin position="117"/>
        <end position="124"/>
    </location>
    <ligand>
        <name>CMP-N-acetyl-beta-neuraminate</name>
        <dbReference type="ChEBI" id="CHEBI:57812"/>
    </ligand>
</feature>
<feature type="binding site" evidence="1">
    <location>
        <position position="188"/>
    </location>
    <ligand>
        <name>CMP-N-acetyl-beta-neuraminate</name>
        <dbReference type="ChEBI" id="CHEBI:57812"/>
    </ligand>
</feature>
<feature type="binding site" evidence="1">
    <location>
        <begin position="210"/>
        <end position="214"/>
    </location>
    <ligand>
        <name>CMP-N-acetyl-beta-neuraminate</name>
        <dbReference type="ChEBI" id="CHEBI:57812"/>
    </ligand>
</feature>
<feature type="binding site" evidence="1">
    <location>
        <position position="272"/>
    </location>
    <ligand>
        <name>CMP-N-acetyl-beta-neuraminate</name>
        <dbReference type="ChEBI" id="CHEBI:57812"/>
    </ligand>
</feature>
<feature type="splice variant" id="VSP_042916" description="In isoform 2." evidence="7">
    <original>GVYFEKVLKSSDTSLWVRNIQMYLSGIIVTLAGVYLSDGAEIKEKGFFYGYTYYVWFVIF</original>
    <variation>V</variation>
    <location>
        <begin position="192"/>
        <end position="251"/>
    </location>
</feature>
<feature type="sequence variant" id="VAR_086836" description="In CDG2F; results in decreased CMP-sialic acid transmembrane transporter activity when expressed in a heterologous system; does not affect localization to Golgi apparatus; dbSNP:rs1554166294." evidence="4">
    <original>Q</original>
    <variation>H</variation>
    <location>
        <position position="101"/>
    </location>
</feature>
<feature type="sequence variant" id="VAR_086837" description="In CDG2F; dbSNP:rs578205635." evidence="5">
    <original>T</original>
    <variation>R</variation>
    <location>
        <position position="156"/>
    </location>
</feature>
<feature type="sequence variant" id="VAR_086838" description="In CDG2F; dbSNP:rs1554166844." evidence="5">
    <original>E</original>
    <variation>K</variation>
    <location>
        <position position="196"/>
    </location>
</feature>
<keyword id="KW-0025">Alternative splicing</keyword>
<keyword id="KW-0050">Antiport</keyword>
<keyword id="KW-0900">Congenital disorder of glycosylation</keyword>
<keyword id="KW-0225">Disease variant</keyword>
<keyword id="KW-0333">Golgi apparatus</keyword>
<keyword id="KW-0472">Membrane</keyword>
<keyword id="KW-1267">Proteomics identification</keyword>
<keyword id="KW-1185">Reference proteome</keyword>
<keyword id="KW-0762">Sugar transport</keyword>
<keyword id="KW-0812">Transmembrane</keyword>
<keyword id="KW-1133">Transmembrane helix</keyword>
<keyword id="KW-0813">Transport</keyword>
<reference key="1">
    <citation type="journal article" date="1996" name="J. Biochem.">
        <title>Molecular cloning and characterization of a novel isoform of the human UDP-galactose transporter, and of related complementary DNAs belonging to the nucleotide-sugar transporter gene family.</title>
        <authorList>
            <person name="Ishida N."/>
            <person name="Miura N."/>
            <person name="Yoshioka S."/>
            <person name="Kawakita M."/>
        </authorList>
    </citation>
    <scope>NUCLEOTIDE SEQUENCE [MRNA] (ISOFORM 1)</scope>
    <source>
        <tissue>Liver</tissue>
    </source>
</reference>
<reference key="2">
    <citation type="journal article" date="2005" name="Blood">
        <title>Genetic complementation reveals a novel human congenital disorder of glycosylation of type II, due to inactivation of the Golgi CMP-sialic acid transporter.</title>
        <authorList>
            <person name="Martinez-Duncker I."/>
            <person name="Dupre T."/>
            <person name="Piller V."/>
            <person name="Piller F."/>
            <person name="Candelier J.-J."/>
            <person name="Trichet C."/>
            <person name="Tchernia G."/>
            <person name="Oriol R."/>
            <person name="Mollicone R."/>
        </authorList>
    </citation>
    <scope>NUCLEOTIDE SEQUENCE [MRNA] (ISOFORM 2)</scope>
    <scope>FUNCTION</scope>
    <scope>INVOLVEMENT IN CDG2F</scope>
    <scope>TRANSPORTER ACTIVITY</scope>
</reference>
<reference key="3">
    <citation type="journal article" date="2003" name="Nature">
        <title>The DNA sequence and analysis of human chromosome 6.</title>
        <authorList>
            <person name="Mungall A.J."/>
            <person name="Palmer S.A."/>
            <person name="Sims S.K."/>
            <person name="Edwards C.A."/>
            <person name="Ashurst J.L."/>
            <person name="Wilming L."/>
            <person name="Jones M.C."/>
            <person name="Horton R."/>
            <person name="Hunt S.E."/>
            <person name="Scott C.E."/>
            <person name="Gilbert J.G.R."/>
            <person name="Clamp M.E."/>
            <person name="Bethel G."/>
            <person name="Milne S."/>
            <person name="Ainscough R."/>
            <person name="Almeida J.P."/>
            <person name="Ambrose K.D."/>
            <person name="Andrews T.D."/>
            <person name="Ashwell R.I.S."/>
            <person name="Babbage A.K."/>
            <person name="Bagguley C.L."/>
            <person name="Bailey J."/>
            <person name="Banerjee R."/>
            <person name="Barker D.J."/>
            <person name="Barlow K.F."/>
            <person name="Bates K."/>
            <person name="Beare D.M."/>
            <person name="Beasley H."/>
            <person name="Beasley O."/>
            <person name="Bird C.P."/>
            <person name="Blakey S.E."/>
            <person name="Bray-Allen S."/>
            <person name="Brook J."/>
            <person name="Brown A.J."/>
            <person name="Brown J.Y."/>
            <person name="Burford D.C."/>
            <person name="Burrill W."/>
            <person name="Burton J."/>
            <person name="Carder C."/>
            <person name="Carter N.P."/>
            <person name="Chapman J.C."/>
            <person name="Clark S.Y."/>
            <person name="Clark G."/>
            <person name="Clee C.M."/>
            <person name="Clegg S."/>
            <person name="Cobley V."/>
            <person name="Collier R.E."/>
            <person name="Collins J.E."/>
            <person name="Colman L.K."/>
            <person name="Corby N.R."/>
            <person name="Coville G.J."/>
            <person name="Culley K.M."/>
            <person name="Dhami P."/>
            <person name="Davies J."/>
            <person name="Dunn M."/>
            <person name="Earthrowl M.E."/>
            <person name="Ellington A.E."/>
            <person name="Evans K.A."/>
            <person name="Faulkner L."/>
            <person name="Francis M.D."/>
            <person name="Frankish A."/>
            <person name="Frankland J."/>
            <person name="French L."/>
            <person name="Garner P."/>
            <person name="Garnett J."/>
            <person name="Ghori M.J."/>
            <person name="Gilby L.M."/>
            <person name="Gillson C.J."/>
            <person name="Glithero R.J."/>
            <person name="Grafham D.V."/>
            <person name="Grant M."/>
            <person name="Gribble S."/>
            <person name="Griffiths C."/>
            <person name="Griffiths M.N.D."/>
            <person name="Hall R."/>
            <person name="Halls K.S."/>
            <person name="Hammond S."/>
            <person name="Harley J.L."/>
            <person name="Hart E.A."/>
            <person name="Heath P.D."/>
            <person name="Heathcott R."/>
            <person name="Holmes S.J."/>
            <person name="Howden P.J."/>
            <person name="Howe K.L."/>
            <person name="Howell G.R."/>
            <person name="Huckle E."/>
            <person name="Humphray S.J."/>
            <person name="Humphries M.D."/>
            <person name="Hunt A.R."/>
            <person name="Johnson C.M."/>
            <person name="Joy A.A."/>
            <person name="Kay M."/>
            <person name="Keenan S.J."/>
            <person name="Kimberley A.M."/>
            <person name="King A."/>
            <person name="Laird G.K."/>
            <person name="Langford C."/>
            <person name="Lawlor S."/>
            <person name="Leongamornlert D.A."/>
            <person name="Leversha M."/>
            <person name="Lloyd C.R."/>
            <person name="Lloyd D.M."/>
            <person name="Loveland J.E."/>
            <person name="Lovell J."/>
            <person name="Martin S."/>
            <person name="Mashreghi-Mohammadi M."/>
            <person name="Maslen G.L."/>
            <person name="Matthews L."/>
            <person name="McCann O.T."/>
            <person name="McLaren S.J."/>
            <person name="McLay K."/>
            <person name="McMurray A."/>
            <person name="Moore M.J.F."/>
            <person name="Mullikin J.C."/>
            <person name="Niblett D."/>
            <person name="Nickerson T."/>
            <person name="Novik K.L."/>
            <person name="Oliver K."/>
            <person name="Overton-Larty E.K."/>
            <person name="Parker A."/>
            <person name="Patel R."/>
            <person name="Pearce A.V."/>
            <person name="Peck A.I."/>
            <person name="Phillimore B.J.C.T."/>
            <person name="Phillips S."/>
            <person name="Plumb R.W."/>
            <person name="Porter K.M."/>
            <person name="Ramsey Y."/>
            <person name="Ranby S.A."/>
            <person name="Rice C.M."/>
            <person name="Ross M.T."/>
            <person name="Searle S.M."/>
            <person name="Sehra H.K."/>
            <person name="Sheridan E."/>
            <person name="Skuce C.D."/>
            <person name="Smith S."/>
            <person name="Smith M."/>
            <person name="Spraggon L."/>
            <person name="Squares S.L."/>
            <person name="Steward C.A."/>
            <person name="Sycamore N."/>
            <person name="Tamlyn-Hall G."/>
            <person name="Tester J."/>
            <person name="Theaker A.J."/>
            <person name="Thomas D.W."/>
            <person name="Thorpe A."/>
            <person name="Tracey A."/>
            <person name="Tromans A."/>
            <person name="Tubby B."/>
            <person name="Wall M."/>
            <person name="Wallis J.M."/>
            <person name="West A.P."/>
            <person name="White S.S."/>
            <person name="Whitehead S.L."/>
            <person name="Whittaker H."/>
            <person name="Wild A."/>
            <person name="Willey D.J."/>
            <person name="Wilmer T.E."/>
            <person name="Wood J.M."/>
            <person name="Wray P.W."/>
            <person name="Wyatt J.C."/>
            <person name="Young L."/>
            <person name="Younger R.M."/>
            <person name="Bentley D.R."/>
            <person name="Coulson A."/>
            <person name="Durbin R.M."/>
            <person name="Hubbard T."/>
            <person name="Sulston J.E."/>
            <person name="Dunham I."/>
            <person name="Rogers J."/>
            <person name="Beck S."/>
        </authorList>
    </citation>
    <scope>NUCLEOTIDE SEQUENCE [LARGE SCALE GENOMIC DNA]</scope>
</reference>
<reference key="4">
    <citation type="journal article" date="2004" name="Genome Res.">
        <title>The status, quality, and expansion of the NIH full-length cDNA project: the Mammalian Gene Collection (MGC).</title>
        <authorList>
            <consortium name="The MGC Project Team"/>
        </authorList>
    </citation>
    <scope>NUCLEOTIDE SEQUENCE [LARGE SCALE MRNA] (ISOFORM 1)</scope>
    <source>
        <tissue>Lung</tissue>
    </source>
</reference>
<reference key="5">
    <citation type="journal article" date="2003" name="J. Biol. Chem.">
        <title>Substrate recognition by nucleotide sugar transporters: further characterization of substrate recognition regions by analyses of UDP-galactose/CMP-sialic acid transporter chimeras and biochemical analysis of the substrate specificity of parental and chimeric transporters.</title>
        <authorList>
            <person name="Aoki K."/>
            <person name="Ishida N."/>
            <person name="Kawakita M."/>
        </authorList>
    </citation>
    <scope>FUNCTION</scope>
    <scope>TRANSPORTER ACTIVITY</scope>
    <scope>BIOPHYSICOCHEMICAL PROPERTIES</scope>
</reference>
<reference key="6">
    <citation type="journal article" date="2019" name="Elife">
        <title>Structural basis for mammalian nucleotide sugar transport.</title>
        <authorList>
            <person name="Ahuja S."/>
            <person name="Whorton M.R."/>
        </authorList>
    </citation>
    <scope>SUBUNIT</scope>
</reference>
<reference key="7">
    <citation type="journal article" date="2013" name="Neurology">
        <title>Intellectual disability and bleeding diathesis due to deficient CMP--sialic acid transport.</title>
        <authorList>
            <person name="Mohamed M."/>
            <person name="Ashikov A."/>
            <person name="Guillard M."/>
            <person name="Robben J.H."/>
            <person name="Schmidt S."/>
            <person name="van den Heuvel B."/>
            <person name="de Brouwer A.P."/>
            <person name="Gerardy-Schahn R."/>
            <person name="Deen P.M."/>
            <person name="Wevers R.A."/>
            <person name="Lefeber D.J."/>
            <person name="Morava E."/>
        </authorList>
    </citation>
    <scope>SUBCELLULAR LOCATION</scope>
    <scope>FUNCTION</scope>
    <scope>VARIANT CDG2F HIS-101</scope>
    <scope>CHARACTERIZATION OF VARIANT CDG2F HIS-101</scope>
    <scope>INVOLVEMENT IN CDG2F</scope>
</reference>
<reference key="8">
    <citation type="journal article" date="2017" name="Am. J. Med. Genet. A">
        <title>Encephalopathy caused by novel mutations in the CMP-sialic acid transporter, SLC35A1.</title>
        <authorList>
            <consortium name="University of Washington Center for Mendelian Genomics"/>
            <person name="Ng B.G."/>
            <person name="Asteggiano C.G."/>
            <person name="Kircher M."/>
            <person name="Buckingham K.J."/>
            <person name="Raymond K."/>
            <person name="Nickerson D.A."/>
            <person name="Shendure J."/>
            <person name="Bamshad M.J."/>
            <person name="Ensslen M."/>
            <person name="Freeze H.H."/>
        </authorList>
    </citation>
    <scope>VARIANTS CDG2F ARG-156 AND LYS-196</scope>
</reference>
<name>S35A1_HUMAN</name>
<accession>P78382</accession>
<accession>Q5W1L8</accession>
<gene>
    <name evidence="10" type="primary">SLC35A1</name>
</gene>
<evidence type="ECO:0000250" key="1">
    <source>
        <dbReference type="UniProtKB" id="Q61420"/>
    </source>
</evidence>
<evidence type="ECO:0000269" key="2">
    <source>
    </source>
</evidence>
<evidence type="ECO:0000269" key="3">
    <source>
    </source>
</evidence>
<evidence type="ECO:0000269" key="4">
    <source>
    </source>
</evidence>
<evidence type="ECO:0000269" key="5">
    <source>
    </source>
</evidence>
<evidence type="ECO:0000269" key="6">
    <source>
    </source>
</evidence>
<evidence type="ECO:0000303" key="7">
    <source>
    </source>
</evidence>
<evidence type="ECO:0000305" key="8"/>
<evidence type="ECO:0000305" key="9">
    <source>
    </source>
</evidence>
<evidence type="ECO:0000312" key="10">
    <source>
        <dbReference type="HGNC" id="HGNC:11021"/>
    </source>
</evidence>
<organism>
    <name type="scientific">Homo sapiens</name>
    <name type="common">Human</name>
    <dbReference type="NCBI Taxonomy" id="9606"/>
    <lineage>
        <taxon>Eukaryota</taxon>
        <taxon>Metazoa</taxon>
        <taxon>Chordata</taxon>
        <taxon>Craniata</taxon>
        <taxon>Vertebrata</taxon>
        <taxon>Euteleostomi</taxon>
        <taxon>Mammalia</taxon>
        <taxon>Eutheria</taxon>
        <taxon>Euarchontoglires</taxon>
        <taxon>Primates</taxon>
        <taxon>Haplorrhini</taxon>
        <taxon>Catarrhini</taxon>
        <taxon>Hominidae</taxon>
        <taxon>Homo</taxon>
    </lineage>
</organism>
<sequence length="337" mass="36779">MAAPRDNVTLLFKLYCLAVMTLMAAVYTIALRYTRTSDKELYFSTTAVCITEVIKLLLSVGILAKETGSLGRFKASLRENVLGSPKELLKLSVPSLVYAVQNNMAFLALSNLDAAVYQVTYQLKIPCTALCTVLMLNRTLSKLQWVSVFMLCAGVTLVQWKPAQATKVVVEQNPLLGFGAIAIAVLCSGFAGVYFEKVLKSSDTSLWVRNIQMYLSGIIVTLAGVYLSDGAEIKEKGFFYGYTYYVWFVIFLASVGGLYTSVVVKYTDNIMKGFSAAAAIVLSTIASVMLFGLQITLTFALGTLLVCVSIYLYGLPRQDTTSIQQGETASKERVIGV</sequence>
<dbReference type="EMBL" id="D87969">
    <property type="protein sequence ID" value="BAA13522.1"/>
    <property type="molecule type" value="mRNA"/>
</dbReference>
<dbReference type="EMBL" id="AJ851888">
    <property type="protein sequence ID" value="CAH65468.1"/>
    <property type="molecule type" value="mRNA"/>
</dbReference>
<dbReference type="EMBL" id="AL049697">
    <property type="status" value="NOT_ANNOTATED_CDS"/>
    <property type="molecule type" value="Genomic_DNA"/>
</dbReference>
<dbReference type="EMBL" id="BC017807">
    <property type="protein sequence ID" value="AAH17807.1"/>
    <property type="molecule type" value="mRNA"/>
</dbReference>
<dbReference type="CCDS" id="CCDS5010.1">
    <molecule id="P78382-1"/>
</dbReference>
<dbReference type="CCDS" id="CCDS55043.1">
    <molecule id="P78382-2"/>
</dbReference>
<dbReference type="PIR" id="JC5023">
    <property type="entry name" value="JC5023"/>
</dbReference>
<dbReference type="RefSeq" id="NP_001161870.1">
    <molecule id="P78382-2"/>
    <property type="nucleotide sequence ID" value="NM_001168398.2"/>
</dbReference>
<dbReference type="RefSeq" id="NP_006407.1">
    <molecule id="P78382-1"/>
    <property type="nucleotide sequence ID" value="NM_006416.5"/>
</dbReference>
<dbReference type="SMR" id="P78382"/>
<dbReference type="BioGRID" id="115810">
    <property type="interactions" value="62"/>
</dbReference>
<dbReference type="FunCoup" id="P78382">
    <property type="interactions" value="945"/>
</dbReference>
<dbReference type="IntAct" id="P78382">
    <property type="interactions" value="39"/>
</dbReference>
<dbReference type="MINT" id="P78382"/>
<dbReference type="STRING" id="9606.ENSP00000358565"/>
<dbReference type="TCDB" id="2.A.7.12.11">
    <property type="family name" value="the drug/metabolite transporter (dmt) superfamily"/>
</dbReference>
<dbReference type="GlyGen" id="P78382">
    <property type="glycosylation" value="1 site, 1 O-linked glycan (1 site)"/>
</dbReference>
<dbReference type="iPTMnet" id="P78382"/>
<dbReference type="PhosphoSitePlus" id="P78382"/>
<dbReference type="BioMuta" id="SLC35A1"/>
<dbReference type="DMDM" id="2499226"/>
<dbReference type="jPOST" id="P78382"/>
<dbReference type="MassIVE" id="P78382"/>
<dbReference type="PaxDb" id="9606-ENSP00000358565"/>
<dbReference type="PeptideAtlas" id="P78382"/>
<dbReference type="ProteomicsDB" id="57606">
    <molecule id="P78382-1"/>
</dbReference>
<dbReference type="ProteomicsDB" id="57607">
    <molecule id="P78382-2"/>
</dbReference>
<dbReference type="Pumba" id="P78382"/>
<dbReference type="Antibodypedia" id="46448">
    <property type="antibodies" value="27 antibodies from 13 providers"/>
</dbReference>
<dbReference type="DNASU" id="10559"/>
<dbReference type="Ensembl" id="ENST00000369552.9">
    <molecule id="P78382-1"/>
    <property type="protein sequence ID" value="ENSP00000358565.4"/>
    <property type="gene ID" value="ENSG00000164414.19"/>
</dbReference>
<dbReference type="Ensembl" id="ENST00000369556.7">
    <molecule id="P78382-2"/>
    <property type="protein sequence ID" value="ENSP00000358569.3"/>
    <property type="gene ID" value="ENSG00000164414.19"/>
</dbReference>
<dbReference type="GeneID" id="10559"/>
<dbReference type="KEGG" id="hsa:10559"/>
<dbReference type="MANE-Select" id="ENST00000369552.9">
    <property type="protein sequence ID" value="ENSP00000358565.4"/>
    <property type="RefSeq nucleotide sequence ID" value="NM_006416.5"/>
    <property type="RefSeq protein sequence ID" value="NP_006407.1"/>
</dbReference>
<dbReference type="UCSC" id="uc010kbx.4">
    <molecule id="P78382-1"/>
    <property type="organism name" value="human"/>
</dbReference>
<dbReference type="AGR" id="HGNC:11021"/>
<dbReference type="CTD" id="10559"/>
<dbReference type="DisGeNET" id="10559"/>
<dbReference type="GeneCards" id="SLC35A1"/>
<dbReference type="HGNC" id="HGNC:11021">
    <property type="gene designation" value="SLC35A1"/>
</dbReference>
<dbReference type="HPA" id="ENSG00000164414">
    <property type="expression patterns" value="Low tissue specificity"/>
</dbReference>
<dbReference type="MalaCards" id="SLC35A1"/>
<dbReference type="MIM" id="603585">
    <property type="type" value="phenotype"/>
</dbReference>
<dbReference type="MIM" id="605634">
    <property type="type" value="gene"/>
</dbReference>
<dbReference type="neXtProt" id="NX_P78382"/>
<dbReference type="OpenTargets" id="ENSG00000164414"/>
<dbReference type="Orphanet" id="238459">
    <property type="disease" value="SLC35A1-CDG"/>
</dbReference>
<dbReference type="PharmGKB" id="PA35889"/>
<dbReference type="VEuPathDB" id="HostDB:ENSG00000164414"/>
<dbReference type="eggNOG" id="KOG2234">
    <property type="taxonomic scope" value="Eukaryota"/>
</dbReference>
<dbReference type="GeneTree" id="ENSGT00950000182827"/>
<dbReference type="HOGENOM" id="CLU_024645_1_0_1"/>
<dbReference type="InParanoid" id="P78382"/>
<dbReference type="OMA" id="KCYVIAS"/>
<dbReference type="OrthoDB" id="408493at2759"/>
<dbReference type="PAN-GO" id="P78382">
    <property type="GO annotations" value="2 GO annotations based on evolutionary models"/>
</dbReference>
<dbReference type="PhylomeDB" id="P78382"/>
<dbReference type="TreeFam" id="TF315345"/>
<dbReference type="PathwayCommons" id="P78382"/>
<dbReference type="Reactome" id="R-HSA-4085001">
    <property type="pathway name" value="Sialic acid metabolism"/>
</dbReference>
<dbReference type="Reactome" id="R-HSA-5619037">
    <property type="pathway name" value="Defective SLC35A1 causes congenital disorder of glycosylation 2F (CDG2F)"/>
</dbReference>
<dbReference type="Reactome" id="R-HSA-5663020">
    <property type="pathway name" value="Defective SLC35A1 causes congenital disorder of glycosylation 2F (CDG2F)"/>
</dbReference>
<dbReference type="Reactome" id="R-HSA-727802">
    <property type="pathway name" value="Transport of nucleotide sugars"/>
</dbReference>
<dbReference type="SignaLink" id="P78382"/>
<dbReference type="SIGNOR" id="P78382"/>
<dbReference type="BioGRID-ORCS" id="10559">
    <property type="hits" value="96 hits in 1169 CRISPR screens"/>
</dbReference>
<dbReference type="ChiTaRS" id="SLC35A1">
    <property type="organism name" value="human"/>
</dbReference>
<dbReference type="GenomeRNAi" id="10559"/>
<dbReference type="Pharos" id="P78382">
    <property type="development level" value="Tbio"/>
</dbReference>
<dbReference type="PRO" id="PR:P78382"/>
<dbReference type="Proteomes" id="UP000005640">
    <property type="component" value="Chromosome 6"/>
</dbReference>
<dbReference type="RNAct" id="P78382">
    <property type="molecule type" value="protein"/>
</dbReference>
<dbReference type="Bgee" id="ENSG00000164414">
    <property type="expression patterns" value="Expressed in monocyte and 99 other cell types or tissues"/>
</dbReference>
<dbReference type="ExpressionAtlas" id="P78382">
    <property type="expression patterns" value="baseline and differential"/>
</dbReference>
<dbReference type="GO" id="GO:0005794">
    <property type="term" value="C:Golgi apparatus"/>
    <property type="evidence" value="ECO:0000304"/>
    <property type="project" value="ProtInc"/>
</dbReference>
<dbReference type="GO" id="GO:0000139">
    <property type="term" value="C:Golgi membrane"/>
    <property type="evidence" value="ECO:0000318"/>
    <property type="project" value="GO_Central"/>
</dbReference>
<dbReference type="GO" id="GO:0016020">
    <property type="term" value="C:membrane"/>
    <property type="evidence" value="ECO:0000250"/>
    <property type="project" value="UniProtKB"/>
</dbReference>
<dbReference type="GO" id="GO:0005886">
    <property type="term" value="C:plasma membrane"/>
    <property type="evidence" value="ECO:0000304"/>
    <property type="project" value="ProtInc"/>
</dbReference>
<dbReference type="GO" id="GO:0015297">
    <property type="term" value="F:antiporter activity"/>
    <property type="evidence" value="ECO:0000250"/>
    <property type="project" value="UniProtKB"/>
</dbReference>
<dbReference type="GO" id="GO:0005456">
    <property type="term" value="F:CMP-N-acetylneuraminate transmembrane transporter activity"/>
    <property type="evidence" value="ECO:0000250"/>
    <property type="project" value="UniProtKB"/>
</dbReference>
<dbReference type="GO" id="GO:0005975">
    <property type="term" value="P:carbohydrate metabolic process"/>
    <property type="evidence" value="ECO:0000304"/>
    <property type="project" value="ProtInc"/>
</dbReference>
<dbReference type="GO" id="GO:0006055">
    <property type="term" value="P:CMP-N-acetylneuraminate biosynthetic process"/>
    <property type="evidence" value="ECO:0007669"/>
    <property type="project" value="Ensembl"/>
</dbReference>
<dbReference type="GO" id="GO:0015782">
    <property type="term" value="P:CMP-N-acetylneuraminate transmembrane transport"/>
    <property type="evidence" value="ECO:0000314"/>
    <property type="project" value="UniProtKB"/>
</dbReference>
<dbReference type="GO" id="GO:0006054">
    <property type="term" value="P:N-acetylneuraminate metabolic process"/>
    <property type="evidence" value="ECO:0007669"/>
    <property type="project" value="Ensembl"/>
</dbReference>
<dbReference type="GO" id="GO:0036211">
    <property type="term" value="P:protein modification process"/>
    <property type="evidence" value="ECO:0000304"/>
    <property type="project" value="ProtInc"/>
</dbReference>
<dbReference type="InterPro" id="IPR007271">
    <property type="entry name" value="Nuc_sug_transpt"/>
</dbReference>
<dbReference type="NCBIfam" id="TIGR00803">
    <property type="entry name" value="nst"/>
    <property type="match status" value="1"/>
</dbReference>
<dbReference type="PANTHER" id="PTHR10231">
    <property type="entry name" value="NUCLEOTIDE-SUGAR TRANSMEMBRANE TRANSPORTER"/>
    <property type="match status" value="1"/>
</dbReference>
<dbReference type="Pfam" id="PF04142">
    <property type="entry name" value="Nuc_sug_transp"/>
    <property type="match status" value="1"/>
</dbReference>
<dbReference type="PIRSF" id="PIRSF005799">
    <property type="entry name" value="UDP-gal_transpt"/>
    <property type="match status" value="1"/>
</dbReference>
<dbReference type="SUPFAM" id="SSF103481">
    <property type="entry name" value="Multidrug resistance efflux transporter EmrE"/>
    <property type="match status" value="1"/>
</dbReference>